<evidence type="ECO:0000255" key="1">
    <source>
        <dbReference type="HAMAP-Rule" id="MF_00123"/>
    </source>
</evidence>
<proteinExistence type="inferred from homology"/>
<organism>
    <name type="scientific">Jannaschia sp. (strain CCS1)</name>
    <dbReference type="NCBI Taxonomy" id="290400"/>
    <lineage>
        <taxon>Bacteria</taxon>
        <taxon>Pseudomonadati</taxon>
        <taxon>Pseudomonadota</taxon>
        <taxon>Alphaproteobacteria</taxon>
        <taxon>Rhodobacterales</taxon>
        <taxon>Roseobacteraceae</taxon>
        <taxon>Jannaschia</taxon>
    </lineage>
</organism>
<gene>
    <name evidence="1" type="primary">argS</name>
    <name type="ordered locus">Jann_1507</name>
</gene>
<comment type="catalytic activity">
    <reaction evidence="1">
        <text>tRNA(Arg) + L-arginine + ATP = L-arginyl-tRNA(Arg) + AMP + diphosphate</text>
        <dbReference type="Rhea" id="RHEA:20301"/>
        <dbReference type="Rhea" id="RHEA-COMP:9658"/>
        <dbReference type="Rhea" id="RHEA-COMP:9673"/>
        <dbReference type="ChEBI" id="CHEBI:30616"/>
        <dbReference type="ChEBI" id="CHEBI:32682"/>
        <dbReference type="ChEBI" id="CHEBI:33019"/>
        <dbReference type="ChEBI" id="CHEBI:78442"/>
        <dbReference type="ChEBI" id="CHEBI:78513"/>
        <dbReference type="ChEBI" id="CHEBI:456215"/>
        <dbReference type="EC" id="6.1.1.19"/>
    </reaction>
</comment>
<comment type="subunit">
    <text evidence="1">Monomer.</text>
</comment>
<comment type="subcellular location">
    <subcellularLocation>
        <location evidence="1">Cytoplasm</location>
    </subcellularLocation>
</comment>
<comment type="similarity">
    <text evidence="1">Belongs to the class-I aminoacyl-tRNA synthetase family.</text>
</comment>
<reference key="1">
    <citation type="submission" date="2006-02" db="EMBL/GenBank/DDBJ databases">
        <title>Complete sequence of chromosome of Jannaschia sp. CCS1.</title>
        <authorList>
            <consortium name="US DOE Joint Genome Institute"/>
            <person name="Copeland A."/>
            <person name="Lucas S."/>
            <person name="Lapidus A."/>
            <person name="Barry K."/>
            <person name="Detter J.C."/>
            <person name="Glavina del Rio T."/>
            <person name="Hammon N."/>
            <person name="Israni S."/>
            <person name="Pitluck S."/>
            <person name="Brettin T."/>
            <person name="Bruce D."/>
            <person name="Han C."/>
            <person name="Tapia R."/>
            <person name="Gilna P."/>
            <person name="Chertkov O."/>
            <person name="Saunders E."/>
            <person name="Schmutz J."/>
            <person name="Larimer F."/>
            <person name="Land M."/>
            <person name="Kyrpides N."/>
            <person name="Lykidis A."/>
            <person name="Moran M.A."/>
            <person name="Belas R."/>
            <person name="Ye W."/>
            <person name="Buchan A."/>
            <person name="Gonzalez J.M."/>
            <person name="Schell M.A."/>
            <person name="Richardson P."/>
        </authorList>
    </citation>
    <scope>NUCLEOTIDE SEQUENCE [LARGE SCALE GENOMIC DNA]</scope>
    <source>
        <strain>CCS1</strain>
    </source>
</reference>
<sequence length="575" mass="62834">MTLFAEIRDTVLAAIDTLVADNVLPSGLEMRAVTVEPPRDASHGDMATNAAMVLAKPAGMKPRDIAEALAAKLADDARIDTVDVAGPGFLNLRLSGDVWRGVIADALTQGEAYGRSKIGAGKRVNVEYVSANPTGPLHVGHTRGAVFGDALASLLDVAGYDVTREYYINDGGAQVDVLVRSVYLRYLEAHGQDVAFEDGTYPGDYLIDVGQALKDKVGDAFVDKGEQFWLAEIREFATEQMMDLIRKDLALLGVEMDVFYSEKSLYGTGRIEAAIDDLRGKGLIYEGYLEPPKGKTPEDWEPREQTLFKSTEHGDDVDRPVMKSDGSWTYFAPDIAYHFDKVSRGFDELIDVFGADHGGYVKRMKAAVSALSGGDVPLDVKLTQLVKLRRGDEELKMSKRAGTFVTLADVVEMVGADVTRFHMLTRKNDAPLDFDVDKVREQSKDNPVWYVQYAHARIKSVLRKAEEAGMSPDPANLNAVNDPAELALAAKIAEYPRLIEIAAKGNEPHRVAFYLFDLASDFHGLWNKGNAETHLRFFQDDDPSATSGKLCLISAVAIVISNGLGILGVTPVDQM</sequence>
<name>SYR_JANSC</name>
<protein>
    <recommendedName>
        <fullName evidence="1">Arginine--tRNA ligase</fullName>
        <ecNumber evidence="1">6.1.1.19</ecNumber>
    </recommendedName>
    <alternativeName>
        <fullName evidence="1">Arginyl-tRNA synthetase</fullName>
        <shortName evidence="1">ArgRS</shortName>
    </alternativeName>
</protein>
<dbReference type="EC" id="6.1.1.19" evidence="1"/>
<dbReference type="EMBL" id="CP000264">
    <property type="protein sequence ID" value="ABD54424.1"/>
    <property type="molecule type" value="Genomic_DNA"/>
</dbReference>
<dbReference type="RefSeq" id="WP_011454631.1">
    <property type="nucleotide sequence ID" value="NC_007802.1"/>
</dbReference>
<dbReference type="SMR" id="Q28S88"/>
<dbReference type="STRING" id="290400.Jann_1507"/>
<dbReference type="KEGG" id="jan:Jann_1507"/>
<dbReference type="eggNOG" id="COG0018">
    <property type="taxonomic scope" value="Bacteria"/>
</dbReference>
<dbReference type="HOGENOM" id="CLU_006406_0_1_5"/>
<dbReference type="OrthoDB" id="9803211at2"/>
<dbReference type="Proteomes" id="UP000008326">
    <property type="component" value="Chromosome"/>
</dbReference>
<dbReference type="GO" id="GO:0005737">
    <property type="term" value="C:cytoplasm"/>
    <property type="evidence" value="ECO:0007669"/>
    <property type="project" value="UniProtKB-SubCell"/>
</dbReference>
<dbReference type="GO" id="GO:0004814">
    <property type="term" value="F:arginine-tRNA ligase activity"/>
    <property type="evidence" value="ECO:0007669"/>
    <property type="project" value="UniProtKB-UniRule"/>
</dbReference>
<dbReference type="GO" id="GO:0005524">
    <property type="term" value="F:ATP binding"/>
    <property type="evidence" value="ECO:0007669"/>
    <property type="project" value="UniProtKB-UniRule"/>
</dbReference>
<dbReference type="GO" id="GO:0006420">
    <property type="term" value="P:arginyl-tRNA aminoacylation"/>
    <property type="evidence" value="ECO:0007669"/>
    <property type="project" value="UniProtKB-UniRule"/>
</dbReference>
<dbReference type="CDD" id="cd00671">
    <property type="entry name" value="ArgRS_core"/>
    <property type="match status" value="1"/>
</dbReference>
<dbReference type="FunFam" id="1.10.730.10:FF:000008">
    <property type="entry name" value="Arginine--tRNA ligase"/>
    <property type="match status" value="1"/>
</dbReference>
<dbReference type="FunFam" id="3.30.1360.70:FF:000003">
    <property type="entry name" value="Arginine--tRNA ligase"/>
    <property type="match status" value="1"/>
</dbReference>
<dbReference type="FunFam" id="3.40.50.620:FF:000062">
    <property type="entry name" value="Arginine--tRNA ligase"/>
    <property type="match status" value="1"/>
</dbReference>
<dbReference type="Gene3D" id="3.30.1360.70">
    <property type="entry name" value="Arginyl tRNA synthetase N-terminal domain"/>
    <property type="match status" value="1"/>
</dbReference>
<dbReference type="Gene3D" id="3.40.50.620">
    <property type="entry name" value="HUPs"/>
    <property type="match status" value="1"/>
</dbReference>
<dbReference type="Gene3D" id="1.10.730.10">
    <property type="entry name" value="Isoleucyl-tRNA Synthetase, Domain 1"/>
    <property type="match status" value="1"/>
</dbReference>
<dbReference type="HAMAP" id="MF_00123">
    <property type="entry name" value="Arg_tRNA_synth"/>
    <property type="match status" value="1"/>
</dbReference>
<dbReference type="InterPro" id="IPR001412">
    <property type="entry name" value="aa-tRNA-synth_I_CS"/>
</dbReference>
<dbReference type="InterPro" id="IPR001278">
    <property type="entry name" value="Arg-tRNA-ligase"/>
</dbReference>
<dbReference type="InterPro" id="IPR005148">
    <property type="entry name" value="Arg-tRNA-synth_N"/>
</dbReference>
<dbReference type="InterPro" id="IPR036695">
    <property type="entry name" value="Arg-tRNA-synth_N_sf"/>
</dbReference>
<dbReference type="InterPro" id="IPR035684">
    <property type="entry name" value="ArgRS_core"/>
</dbReference>
<dbReference type="InterPro" id="IPR008909">
    <property type="entry name" value="DALR_anticod-bd"/>
</dbReference>
<dbReference type="InterPro" id="IPR014729">
    <property type="entry name" value="Rossmann-like_a/b/a_fold"/>
</dbReference>
<dbReference type="InterPro" id="IPR009080">
    <property type="entry name" value="tRNAsynth_Ia_anticodon-bd"/>
</dbReference>
<dbReference type="NCBIfam" id="TIGR00456">
    <property type="entry name" value="argS"/>
    <property type="match status" value="1"/>
</dbReference>
<dbReference type="PANTHER" id="PTHR11956:SF5">
    <property type="entry name" value="ARGININE--TRNA LIGASE, CYTOPLASMIC"/>
    <property type="match status" value="1"/>
</dbReference>
<dbReference type="PANTHER" id="PTHR11956">
    <property type="entry name" value="ARGINYL-TRNA SYNTHETASE"/>
    <property type="match status" value="1"/>
</dbReference>
<dbReference type="Pfam" id="PF03485">
    <property type="entry name" value="Arg_tRNA_synt_N"/>
    <property type="match status" value="1"/>
</dbReference>
<dbReference type="Pfam" id="PF05746">
    <property type="entry name" value="DALR_1"/>
    <property type="match status" value="1"/>
</dbReference>
<dbReference type="Pfam" id="PF00750">
    <property type="entry name" value="tRNA-synt_1d"/>
    <property type="match status" value="1"/>
</dbReference>
<dbReference type="PRINTS" id="PR01038">
    <property type="entry name" value="TRNASYNTHARG"/>
</dbReference>
<dbReference type="SMART" id="SM01016">
    <property type="entry name" value="Arg_tRNA_synt_N"/>
    <property type="match status" value="1"/>
</dbReference>
<dbReference type="SMART" id="SM00836">
    <property type="entry name" value="DALR_1"/>
    <property type="match status" value="1"/>
</dbReference>
<dbReference type="SUPFAM" id="SSF47323">
    <property type="entry name" value="Anticodon-binding domain of a subclass of class I aminoacyl-tRNA synthetases"/>
    <property type="match status" value="1"/>
</dbReference>
<dbReference type="SUPFAM" id="SSF55190">
    <property type="entry name" value="Arginyl-tRNA synthetase (ArgRS), N-terminal 'additional' domain"/>
    <property type="match status" value="1"/>
</dbReference>
<dbReference type="SUPFAM" id="SSF52374">
    <property type="entry name" value="Nucleotidylyl transferase"/>
    <property type="match status" value="1"/>
</dbReference>
<dbReference type="PROSITE" id="PS00178">
    <property type="entry name" value="AA_TRNA_LIGASE_I"/>
    <property type="match status" value="1"/>
</dbReference>
<accession>Q28S88</accession>
<feature type="chain" id="PRO_0000242033" description="Arginine--tRNA ligase">
    <location>
        <begin position="1"/>
        <end position="575"/>
    </location>
</feature>
<feature type="short sequence motif" description="'HIGH' region">
    <location>
        <begin position="131"/>
        <end position="141"/>
    </location>
</feature>
<keyword id="KW-0030">Aminoacyl-tRNA synthetase</keyword>
<keyword id="KW-0067">ATP-binding</keyword>
<keyword id="KW-0963">Cytoplasm</keyword>
<keyword id="KW-0436">Ligase</keyword>
<keyword id="KW-0547">Nucleotide-binding</keyword>
<keyword id="KW-0648">Protein biosynthesis</keyword>
<keyword id="KW-1185">Reference proteome</keyword>